<keyword id="KW-0433">Leucine-rich repeat</keyword>
<keyword id="KW-1185">Reference proteome</keyword>
<keyword id="KW-0677">Repeat</keyword>
<name>SUR8_DROPS</name>
<accession>B5DX45</accession>
<gene>
    <name type="primary">Sur-8</name>
    <name type="ORF">GA27118</name>
</gene>
<sequence length="629" mass="68544">MNLCSSGATASTTSLSSTGQRNGGTSEGGGEGAGGGGGSGGGGGNSSNDGPSEAIHCFGSNGGGGGPEEVFHTSHSHSTANGGGGGGSSNGHSQQHNENNATMPPETRPKMVTVKHPESNKPKPTTKKSKPIQADQDVIKALQRCRDEGIKRLDLSKSSITVIPSTVKECVHLTELYLYSNKIGQLPAEIGCLVNLRNLALNENSLTSLPESLQNCKQLKVLDLRHNKLAEIPPVIYRLRTLTTLYLRFNRITAVADNLRQLVNLTMLSLRENKIRELGSAIGALVNLTTLDVSHNHLEHLPEDIGNCVNLSALDLQHNELLDIPDSIGNLKSLVRLGLRYNRLSSVPATLKNCKSMDEFNVEGNGMTQLPDGMLASLSGLTTITLSRNQFTSYPTGGPAQFTNVYSINLEHNRIDKIPYGIFSRAKGLTKLNMKENMLTALPLDIGTWVNMVELNLATNALQKLPDDIMNLQNLEILILSNNMLKKIPNTIGNMRKLRILDLEENRIEVLPHEIGLLHELQRLILQTNQITMLPRSIGHLSNLTHLSVSENNLQFLPEEIGSLEGLENLYINQNPGLEKLPFELALCQNLKYLNIDKCPLSTIPPEIQAGGPSLVLQWLKMHSPYRQM</sequence>
<feature type="chain" id="PRO_0000385638" description="Leucine-rich repeat protein soc-2 homolog">
    <location>
        <begin position="1"/>
        <end position="629"/>
    </location>
</feature>
<feature type="repeat" description="LRR 1">
    <location>
        <begin position="149"/>
        <end position="170"/>
    </location>
</feature>
<feature type="repeat" description="LRR 2">
    <location>
        <begin position="172"/>
        <end position="193"/>
    </location>
</feature>
<feature type="repeat" description="LRR 3">
    <location>
        <begin position="195"/>
        <end position="217"/>
    </location>
</feature>
<feature type="repeat" description="LRR 4">
    <location>
        <begin position="218"/>
        <end position="239"/>
    </location>
</feature>
<feature type="repeat" description="LRR 5">
    <location>
        <begin position="241"/>
        <end position="262"/>
    </location>
</feature>
<feature type="repeat" description="LRR 6">
    <location>
        <begin position="264"/>
        <end position="285"/>
    </location>
</feature>
<feature type="repeat" description="LRR 7">
    <location>
        <begin position="287"/>
        <end position="308"/>
    </location>
</feature>
<feature type="repeat" description="LRR 8">
    <location>
        <begin position="310"/>
        <end position="331"/>
    </location>
</feature>
<feature type="repeat" description="LRR 9">
    <location>
        <begin position="333"/>
        <end position="355"/>
    </location>
</feature>
<feature type="repeat" description="LRR 10">
    <location>
        <begin position="356"/>
        <end position="377"/>
    </location>
</feature>
<feature type="repeat" description="LRR 11">
    <location>
        <begin position="380"/>
        <end position="401"/>
    </location>
</feature>
<feature type="repeat" description="LRR 12">
    <location>
        <begin position="404"/>
        <end position="425"/>
    </location>
</feature>
<feature type="repeat" description="LRR 13">
    <location>
        <begin position="428"/>
        <end position="449"/>
    </location>
</feature>
<feature type="repeat" description="LRR 14">
    <location>
        <begin position="451"/>
        <end position="472"/>
    </location>
</feature>
<feature type="repeat" description="LRR 15">
    <location>
        <begin position="474"/>
        <end position="495"/>
    </location>
</feature>
<feature type="repeat" description="LRR 16">
    <location>
        <begin position="497"/>
        <end position="518"/>
    </location>
</feature>
<feature type="repeat" description="LRR 17">
    <location>
        <begin position="520"/>
        <end position="541"/>
    </location>
</feature>
<feature type="repeat" description="LRR 18">
    <location>
        <begin position="543"/>
        <end position="564"/>
    </location>
</feature>
<feature type="repeat" description="LRR 19">
    <location>
        <begin position="566"/>
        <end position="588"/>
    </location>
</feature>
<feature type="repeat" description="LRR 20">
    <location>
        <begin position="590"/>
        <end position="611"/>
    </location>
</feature>
<feature type="region of interest" description="Disordered" evidence="2">
    <location>
        <begin position="1"/>
        <end position="133"/>
    </location>
</feature>
<feature type="compositionally biased region" description="Low complexity" evidence="2">
    <location>
        <begin position="1"/>
        <end position="19"/>
    </location>
</feature>
<feature type="compositionally biased region" description="Gly residues" evidence="2">
    <location>
        <begin position="21"/>
        <end position="45"/>
    </location>
</feature>
<organism>
    <name type="scientific">Drosophila pseudoobscura pseudoobscura</name>
    <name type="common">Fruit fly</name>
    <dbReference type="NCBI Taxonomy" id="46245"/>
    <lineage>
        <taxon>Eukaryota</taxon>
        <taxon>Metazoa</taxon>
        <taxon>Ecdysozoa</taxon>
        <taxon>Arthropoda</taxon>
        <taxon>Hexapoda</taxon>
        <taxon>Insecta</taxon>
        <taxon>Pterygota</taxon>
        <taxon>Neoptera</taxon>
        <taxon>Endopterygota</taxon>
        <taxon>Diptera</taxon>
        <taxon>Brachycera</taxon>
        <taxon>Muscomorpha</taxon>
        <taxon>Ephydroidea</taxon>
        <taxon>Drosophilidae</taxon>
        <taxon>Drosophila</taxon>
        <taxon>Sophophora</taxon>
    </lineage>
</organism>
<proteinExistence type="inferred from homology"/>
<evidence type="ECO:0000250" key="1"/>
<evidence type="ECO:0000256" key="2">
    <source>
        <dbReference type="SAM" id="MobiDB-lite"/>
    </source>
</evidence>
<evidence type="ECO:0000305" key="3"/>
<comment type="function">
    <text evidence="1">Acts as a Ras effector and participates in MAPK pathway activation. Probably acts as a regulatory subunit of protein phosphatase that specifically dephosphorylates Raf kinase and stimulate Raf activity at specialized signaling complexes upon Ras activation (By similarity).</text>
</comment>
<comment type="similarity">
    <text evidence="3">Belongs to the SHOC2 family.</text>
</comment>
<protein>
    <recommendedName>
        <fullName>Leucine-rich repeat protein soc-2 homolog</fullName>
    </recommendedName>
    <alternativeName>
        <fullName>Protein Sur-8 homolog</fullName>
    </alternativeName>
    <alternativeName>
        <fullName>Protein soc-2 homolog</fullName>
    </alternativeName>
</protein>
<dbReference type="EMBL" id="CM000070">
    <property type="protein sequence ID" value="EDY67848.1"/>
    <property type="molecule type" value="Genomic_DNA"/>
</dbReference>
<dbReference type="SMR" id="B5DX45"/>
<dbReference type="FunCoup" id="B5DX45">
    <property type="interactions" value="2132"/>
</dbReference>
<dbReference type="STRING" id="46245.B5DX45"/>
<dbReference type="eggNOG" id="KOG0619">
    <property type="taxonomic scope" value="Eukaryota"/>
</dbReference>
<dbReference type="HOGENOM" id="CLU_000288_18_23_1"/>
<dbReference type="InParanoid" id="B5DX45"/>
<dbReference type="OMA" id="NQFTSYP"/>
<dbReference type="ChiTaRS" id="Sur-8">
    <property type="organism name" value="fly"/>
</dbReference>
<dbReference type="Proteomes" id="UP000001819">
    <property type="component" value="Unplaced"/>
</dbReference>
<dbReference type="FunFam" id="3.80.10.10:FF:000031">
    <property type="entry name" value="leucine-rich repeat protein SHOC-2"/>
    <property type="match status" value="1"/>
</dbReference>
<dbReference type="FunFam" id="3.80.10.10:FF:000115">
    <property type="entry name" value="leucine-rich repeat protein SHOC-2"/>
    <property type="match status" value="1"/>
</dbReference>
<dbReference type="FunFam" id="3.80.10.10:FF:000281">
    <property type="entry name" value="Leucine-rich repeat protein soc-2"/>
    <property type="match status" value="1"/>
</dbReference>
<dbReference type="FunFam" id="3.80.10.10:FF:000450">
    <property type="entry name" value="Leucine-rich repeat protein soc-2"/>
    <property type="match status" value="1"/>
</dbReference>
<dbReference type="Gene3D" id="3.80.10.10">
    <property type="entry name" value="Ribonuclease Inhibitor"/>
    <property type="match status" value="4"/>
</dbReference>
<dbReference type="InterPro" id="IPR001611">
    <property type="entry name" value="Leu-rich_rpt"/>
</dbReference>
<dbReference type="InterPro" id="IPR003591">
    <property type="entry name" value="Leu-rich_rpt_typical-subtyp"/>
</dbReference>
<dbReference type="InterPro" id="IPR050715">
    <property type="entry name" value="LRR-SigEffector_domain"/>
</dbReference>
<dbReference type="InterPro" id="IPR032675">
    <property type="entry name" value="LRR_dom_sf"/>
</dbReference>
<dbReference type="InterPro" id="IPR055414">
    <property type="entry name" value="LRR_R13L4/SHOC2-like"/>
</dbReference>
<dbReference type="PANTHER" id="PTHR45752:SF187">
    <property type="entry name" value="LEUCINE-RICH REPEAT AND IQ DOMAIN-CONTAINING PROTEIN 4"/>
    <property type="match status" value="1"/>
</dbReference>
<dbReference type="PANTHER" id="PTHR45752">
    <property type="entry name" value="LEUCINE-RICH REPEAT-CONTAINING"/>
    <property type="match status" value="1"/>
</dbReference>
<dbReference type="Pfam" id="PF23598">
    <property type="entry name" value="LRR_14"/>
    <property type="match status" value="2"/>
</dbReference>
<dbReference type="Pfam" id="PF13855">
    <property type="entry name" value="LRR_8"/>
    <property type="match status" value="1"/>
</dbReference>
<dbReference type="SMART" id="SM00364">
    <property type="entry name" value="LRR_BAC"/>
    <property type="match status" value="10"/>
</dbReference>
<dbReference type="SMART" id="SM00365">
    <property type="entry name" value="LRR_SD22"/>
    <property type="match status" value="7"/>
</dbReference>
<dbReference type="SMART" id="SM00369">
    <property type="entry name" value="LRR_TYP"/>
    <property type="match status" value="14"/>
</dbReference>
<dbReference type="SUPFAM" id="SSF52058">
    <property type="entry name" value="L domain-like"/>
    <property type="match status" value="2"/>
</dbReference>
<dbReference type="PROSITE" id="PS51450">
    <property type="entry name" value="LRR"/>
    <property type="match status" value="19"/>
</dbReference>
<reference key="1">
    <citation type="journal article" date="2005" name="Genome Res.">
        <title>Comparative genome sequencing of Drosophila pseudoobscura: chromosomal, gene, and cis-element evolution.</title>
        <authorList>
            <person name="Richards S."/>
            <person name="Liu Y."/>
            <person name="Bettencourt B.R."/>
            <person name="Hradecky P."/>
            <person name="Letovsky S."/>
            <person name="Nielsen R."/>
            <person name="Thornton K."/>
            <person name="Hubisz M.J."/>
            <person name="Chen R."/>
            <person name="Meisel R.P."/>
            <person name="Couronne O."/>
            <person name="Hua S."/>
            <person name="Smith M.A."/>
            <person name="Zhang P."/>
            <person name="Liu J."/>
            <person name="Bussemaker H.J."/>
            <person name="van Batenburg M.F."/>
            <person name="Howells S.L."/>
            <person name="Scherer S.E."/>
            <person name="Sodergren E."/>
            <person name="Matthews B.B."/>
            <person name="Crosby M.A."/>
            <person name="Schroeder A.J."/>
            <person name="Ortiz-Barrientos D."/>
            <person name="Rives C.M."/>
            <person name="Metzker M.L."/>
            <person name="Muzny D.M."/>
            <person name="Scott G."/>
            <person name="Steffen D."/>
            <person name="Wheeler D.A."/>
            <person name="Worley K.C."/>
            <person name="Havlak P."/>
            <person name="Durbin K.J."/>
            <person name="Egan A."/>
            <person name="Gill R."/>
            <person name="Hume J."/>
            <person name="Morgan M.B."/>
            <person name="Miner G."/>
            <person name="Hamilton C."/>
            <person name="Huang Y."/>
            <person name="Waldron L."/>
            <person name="Verduzco D."/>
            <person name="Clerc-Blankenburg K.P."/>
            <person name="Dubchak I."/>
            <person name="Noor M.A.F."/>
            <person name="Anderson W."/>
            <person name="White K.P."/>
            <person name="Clark A.G."/>
            <person name="Schaeffer S.W."/>
            <person name="Gelbart W.M."/>
            <person name="Weinstock G.M."/>
            <person name="Gibbs R.A."/>
        </authorList>
    </citation>
    <scope>NUCLEOTIDE SEQUENCE [LARGE SCALE GENOMIC DNA]</scope>
    <source>
        <strain>MV2-25 / Tucson 14011-0121.94</strain>
    </source>
</reference>